<comment type="function">
    <text evidence="1 4">Plays a major role in the shutoff of the host protein expression by cleaving mRNAs probably via an endonuclease activity. This host shutoff allows the virus to escape from the host antiviral response (By similarity). Hijacks host RNA splicing machinery to selectively target host RNAs containing introns for destruction. This may explain the preferential degradation of RNAs that have undergone co- or post-transcriptional processing (By similarity).</text>
</comment>
<comment type="subcellular location">
    <subcellularLocation>
        <location evidence="4">Host cytoplasm</location>
    </subcellularLocation>
    <subcellularLocation>
        <location evidence="4">Host nucleus</location>
    </subcellularLocation>
</comment>
<comment type="alternative products">
    <event type="ribosomal frameshifting"/>
    <isoform>
        <id>P0DJW6-1</id>
        <name>PA-X</name>
        <sequence type="displayed"/>
    </isoform>
    <isoform>
        <id>A8C8K1-1</id>
        <name>PA</name>
        <sequence type="external"/>
    </isoform>
</comment>
<comment type="domain">
    <text evidence="1 4">The probable endonuclease active site in the N-terminus and the basic amino acid cluster in the C-terminus are important for the shutoff activity. The C-terminus acts as a nuclear localization signal (By similarity). The C-terminus is recruited to host protein complexes involved in nuclear Pol II RNA processing (By similarity).</text>
</comment>
<comment type="similarity">
    <text evidence="5">Belongs to the influenza viruses PA-X family.</text>
</comment>
<protein>
    <recommendedName>
        <fullName>Protein PA-X</fullName>
    </recommendedName>
</protein>
<organismHost>
    <name type="scientific">Aves</name>
    <dbReference type="NCBI Taxonomy" id="8782"/>
</organismHost>
<organismHost>
    <name type="scientific">Homo sapiens</name>
    <name type="common">Human</name>
    <dbReference type="NCBI Taxonomy" id="9606"/>
</organismHost>
<organismHost>
    <name type="scientific">Sus scrofa</name>
    <name type="common">Pig</name>
    <dbReference type="NCBI Taxonomy" id="9823"/>
</organismHost>
<organism>
    <name type="scientific">Influenza A virus (strain A/USA:Texas/UR06-0195/2007 H1N1)</name>
    <dbReference type="NCBI Taxonomy" id="455880"/>
    <lineage>
        <taxon>Viruses</taxon>
        <taxon>Riboviria</taxon>
        <taxon>Orthornavirae</taxon>
        <taxon>Negarnaviricota</taxon>
        <taxon>Polyploviricotina</taxon>
        <taxon>Insthoviricetes</taxon>
        <taxon>Articulavirales</taxon>
        <taxon>Orthomyxoviridae</taxon>
        <taxon>Alphainfluenzavirus</taxon>
        <taxon>Alphainfluenzavirus influenzae</taxon>
        <taxon>Influenza A virus</taxon>
    </lineage>
</organism>
<feature type="chain" id="PRO_0000419429" description="Protein PA-X">
    <location>
        <begin position="1"/>
        <end position="252"/>
    </location>
</feature>
<feature type="active site" evidence="2">
    <location>
        <position position="80"/>
    </location>
</feature>
<feature type="active site" evidence="2">
    <location>
        <position position="108"/>
    </location>
</feature>
<feature type="site" description="Important for efficient shutoff activity and nuclear localization" evidence="4">
    <location>
        <position position="195"/>
    </location>
</feature>
<feature type="site" description="Important for efficient shutoff activity and nuclear localization" evidence="4">
    <location>
        <position position="198"/>
    </location>
</feature>
<feature type="site" description="Important for efficient shutoff activity and nuclear localization" evidence="4">
    <location>
        <position position="199"/>
    </location>
</feature>
<feature type="site" description="Important for efficient shutoff activity" evidence="3">
    <location>
        <position position="202"/>
    </location>
</feature>
<feature type="site" description="Important for efficient shutoff activity" evidence="3">
    <location>
        <position position="203"/>
    </location>
</feature>
<feature type="site" description="Important for efficient shutoff activity" evidence="3">
    <location>
        <position position="206"/>
    </location>
</feature>
<proteinExistence type="inferred from homology"/>
<evidence type="ECO:0000250" key="1">
    <source>
        <dbReference type="UniProtKB" id="P0CK64"/>
    </source>
</evidence>
<evidence type="ECO:0000250" key="2">
    <source>
        <dbReference type="UniProtKB" id="P0CK68"/>
    </source>
</evidence>
<evidence type="ECO:0000250" key="3">
    <source>
        <dbReference type="UniProtKB" id="P0DJW8"/>
    </source>
</evidence>
<evidence type="ECO:0000250" key="4">
    <source>
        <dbReference type="UniProtKB" id="P0DXO5"/>
    </source>
</evidence>
<evidence type="ECO:0000305" key="5"/>
<name>PAX_I07A0</name>
<keyword id="KW-1132">Decay of host mRNAs by virus</keyword>
<keyword id="KW-1262">Eukaryotic host gene expression shutoff by virus</keyword>
<keyword id="KW-1035">Host cytoplasm</keyword>
<keyword id="KW-1190">Host gene expression shutoff by virus</keyword>
<keyword id="KW-1192">Host mRNA suppression by virus</keyword>
<keyword id="KW-1048">Host nucleus</keyword>
<keyword id="KW-0945">Host-virus interaction</keyword>
<keyword id="KW-0688">Ribosomal frameshifting</keyword>
<gene>
    <name type="primary">PA</name>
</gene>
<dbReference type="EMBL" id="CY026216">
    <property type="status" value="NOT_ANNOTATED_CDS"/>
    <property type="molecule type" value="Viral_cRNA"/>
</dbReference>
<dbReference type="SMR" id="P0DJW6"/>
<dbReference type="Proteomes" id="UP001395887">
    <property type="component" value="Genome"/>
</dbReference>
<dbReference type="GO" id="GO:0003723">
    <property type="term" value="F:RNA binding"/>
    <property type="evidence" value="ECO:0007669"/>
    <property type="project" value="InterPro"/>
</dbReference>
<dbReference type="GO" id="GO:0039694">
    <property type="term" value="P:viral RNA genome replication"/>
    <property type="evidence" value="ECO:0007669"/>
    <property type="project" value="InterPro"/>
</dbReference>
<dbReference type="GO" id="GO:0075523">
    <property type="term" value="P:viral translational frameshifting"/>
    <property type="evidence" value="ECO:0007669"/>
    <property type="project" value="UniProtKB-KW"/>
</dbReference>
<dbReference type="FunFam" id="3.40.91.90:FF:000001">
    <property type="entry name" value="Polymerase acidic protein"/>
    <property type="match status" value="1"/>
</dbReference>
<dbReference type="Gene3D" id="3.40.91.90">
    <property type="entry name" value="Influenza RNA-dependent RNA polymerase subunit PA, endonuclease domain"/>
    <property type="match status" value="1"/>
</dbReference>
<dbReference type="InterPro" id="IPR001009">
    <property type="entry name" value="PA/PA-X"/>
</dbReference>
<dbReference type="InterPro" id="IPR038372">
    <property type="entry name" value="PA/PA-X_sf"/>
</dbReference>
<dbReference type="Pfam" id="PF00603">
    <property type="entry name" value="Flu_PA"/>
    <property type="match status" value="1"/>
</dbReference>
<reference key="1">
    <citation type="submission" date="2007-09" db="EMBL/GenBank/DDBJ databases">
        <title>The NIAID influenza genome sequencing project.</title>
        <authorList>
            <person name="Spiro D."/>
            <person name="Sengamalay N."/>
            <person name="Boyne A."/>
            <person name="Bera J."/>
            <person name="Zaborsky J."/>
            <person name="Subbu V."/>
            <person name="Sparenborg J."/>
            <person name="Gallagher T."/>
            <person name="Overton L."/>
            <person name="Althoff R."/>
            <person name="Liu X."/>
            <person name="Ghedin E."/>
            <person name="Sitz J."/>
            <person name="Katzel D."/>
            <person name="Neupane R."/>
            <person name="Shumway M."/>
            <person name="Koo H."/>
            <person name="Edelman L."/>
            <person name="Menegus M."/>
            <person name="Mayer C."/>
            <person name="Dale S."/>
            <person name="Bao Y."/>
            <person name="Bolotov P."/>
            <person name="Dernovoy D."/>
            <person name="Kiryutin B."/>
            <person name="Lipman D.J."/>
            <person name="Tatusova T."/>
        </authorList>
    </citation>
    <scope>NUCLEOTIDE SEQUENCE [GENOMIC RNA]</scope>
</reference>
<reference key="2">
    <citation type="submission" date="2007-09" db="EMBL/GenBank/DDBJ databases">
        <authorList>
            <consortium name="The NIAID Influenza Genome Sequencing Consortium"/>
        </authorList>
    </citation>
    <scope>NUCLEOTIDE SEQUENCE [GENOMIC RNA]</scope>
</reference>
<accession>P0DJW6</accession>
<sequence length="252" mass="29339">MEDFVRQCFNPMIVELAEKAMKEYGEDLKIETNKFAAICTHLEVCFMYSDFHFINEQGESIIVEPEDPNALLKHRFEIIEGRDRTMAWTVVNSICNTTGAEKPKFLPDLYDYKENRFIEIGVTRREVHIYYLEKANKIKSEKTHIHIFSFTGEEMATKADYTLDEESRARIKTRLFTIRQEMASRGLWDSFVSPKEAKKQLKKGLKSQGQCAGSLIKAFRRTSPALRILEPMWMDSNRTATLRASFLKCPKK</sequence>